<comment type="function">
    <text evidence="1 3">DNA-dependent RNA polymerase catalyzes the transcription of DNA into RNA using the four ribonucleoside triphosphates as substrates.</text>
</comment>
<comment type="catalytic activity">
    <reaction evidence="1">
        <text>RNA(n) + a ribonucleoside 5'-triphosphate = RNA(n+1) + diphosphate</text>
        <dbReference type="Rhea" id="RHEA:21248"/>
        <dbReference type="Rhea" id="RHEA-COMP:14527"/>
        <dbReference type="Rhea" id="RHEA-COMP:17342"/>
        <dbReference type="ChEBI" id="CHEBI:33019"/>
        <dbReference type="ChEBI" id="CHEBI:61557"/>
        <dbReference type="ChEBI" id="CHEBI:140395"/>
        <dbReference type="EC" id="2.7.7.6"/>
    </reaction>
</comment>
<comment type="subunit">
    <text evidence="1 3">Homodimer. The RNAP catalytic core consists of 2 alpha, 1 beta, 1 beta' and 1 omega subunit. When a sigma factor is associated with the core the holoenzyme is formed, which can initiate transcription.</text>
</comment>
<comment type="induction">
    <text evidence="2">3-fold repressed by starvation.</text>
</comment>
<comment type="domain">
    <text evidence="1">The N-terminal domain is essential for RNAP assembly and basal transcription, whereas the C-terminal domain is involved in interaction with transcriptional regulators and with upstream promoter elements.</text>
</comment>
<comment type="similarity">
    <text evidence="1">Belongs to the RNA polymerase alpha chain family.</text>
</comment>
<accession>P9WGZ1</accession>
<accession>L0TCT4</accession>
<accession>O06324</accession>
<accession>P66701</accession>
<proteinExistence type="evidence at protein level"/>
<gene>
    <name evidence="1" type="primary">rpoA</name>
    <name type="ordered locus">Rv3457c</name>
    <name type="ORF">MTCY13E12.10c</name>
</gene>
<evidence type="ECO:0000255" key="1">
    <source>
        <dbReference type="HAMAP-Rule" id="MF_00059"/>
    </source>
</evidence>
<evidence type="ECO:0000269" key="2">
    <source>
    </source>
</evidence>
<evidence type="ECO:0000269" key="3">
    <source>
    </source>
</evidence>
<evidence type="ECO:0007829" key="4">
    <source>
        <dbReference type="PDB" id="5ZX3"/>
    </source>
</evidence>
<evidence type="ECO:0007829" key="5">
    <source>
        <dbReference type="PDB" id="6KOQ"/>
    </source>
</evidence>
<evidence type="ECO:0007829" key="6">
    <source>
        <dbReference type="PDB" id="7KIN"/>
    </source>
</evidence>
<evidence type="ECO:0007829" key="7">
    <source>
        <dbReference type="PDB" id="8E82"/>
    </source>
</evidence>
<evidence type="ECO:0007829" key="8">
    <source>
        <dbReference type="PDB" id="8E8M"/>
    </source>
</evidence>
<evidence type="ECO:0007829" key="9">
    <source>
        <dbReference type="PDB" id="8E95"/>
    </source>
</evidence>
<dbReference type="EC" id="2.7.7.6" evidence="1"/>
<dbReference type="EMBL" id="AL123456">
    <property type="protein sequence ID" value="CCP46279.1"/>
    <property type="molecule type" value="Genomic_DNA"/>
</dbReference>
<dbReference type="PIR" id="F70565">
    <property type="entry name" value="F70565"/>
</dbReference>
<dbReference type="RefSeq" id="NP_217974.1">
    <property type="nucleotide sequence ID" value="NC_000962.3"/>
</dbReference>
<dbReference type="RefSeq" id="WP_003418351.1">
    <property type="nucleotide sequence ID" value="NZ_NVQJ01000065.1"/>
</dbReference>
<dbReference type="PDB" id="5UH5">
    <property type="method" value="X-ray"/>
    <property type="resolution" value="3.75 A"/>
    <property type="chains" value="A/B=1-347"/>
</dbReference>
<dbReference type="PDB" id="5UH6">
    <property type="method" value="X-ray"/>
    <property type="resolution" value="3.84 A"/>
    <property type="chains" value="A/B=1-347"/>
</dbReference>
<dbReference type="PDB" id="5UH8">
    <property type="method" value="X-ray"/>
    <property type="resolution" value="4.18 A"/>
    <property type="chains" value="A/B=1-347"/>
</dbReference>
<dbReference type="PDB" id="5UH9">
    <property type="method" value="X-ray"/>
    <property type="resolution" value="4.40 A"/>
    <property type="chains" value="A/B=1-347"/>
</dbReference>
<dbReference type="PDB" id="5UHA">
    <property type="method" value="X-ray"/>
    <property type="resolution" value="3.91 A"/>
    <property type="chains" value="A/B=1-347"/>
</dbReference>
<dbReference type="PDB" id="5UHB">
    <property type="method" value="X-ray"/>
    <property type="resolution" value="4.29 A"/>
    <property type="chains" value="A/B=1-347"/>
</dbReference>
<dbReference type="PDB" id="5UHC">
    <property type="method" value="X-ray"/>
    <property type="resolution" value="3.80 A"/>
    <property type="chains" value="A/B=1-347"/>
</dbReference>
<dbReference type="PDB" id="5UHD">
    <property type="method" value="X-ray"/>
    <property type="resolution" value="4.01 A"/>
    <property type="chains" value="A/B=1-347"/>
</dbReference>
<dbReference type="PDB" id="5UHE">
    <property type="method" value="X-ray"/>
    <property type="resolution" value="4.04 A"/>
    <property type="chains" value="A/B=1-347"/>
</dbReference>
<dbReference type="PDB" id="5UHF">
    <property type="method" value="X-ray"/>
    <property type="resolution" value="4.34 A"/>
    <property type="chains" value="A/B=1-347"/>
</dbReference>
<dbReference type="PDB" id="5UHG">
    <property type="method" value="X-ray"/>
    <property type="resolution" value="3.97 A"/>
    <property type="chains" value="A/B=1-347"/>
</dbReference>
<dbReference type="PDB" id="5ZX2">
    <property type="method" value="X-ray"/>
    <property type="resolution" value="2.80 A"/>
    <property type="chains" value="A/B=1-347"/>
</dbReference>
<dbReference type="PDB" id="5ZX3">
    <property type="method" value="X-ray"/>
    <property type="resolution" value="2.75 A"/>
    <property type="chains" value="A/B=1-347"/>
</dbReference>
<dbReference type="PDB" id="6BZO">
    <property type="method" value="EM"/>
    <property type="resolution" value="3.38 A"/>
    <property type="chains" value="A/B=1-347"/>
</dbReference>
<dbReference type="PDB" id="6C04">
    <property type="method" value="EM"/>
    <property type="resolution" value="3.27 A"/>
    <property type="chains" value="A/B=1-347"/>
</dbReference>
<dbReference type="PDB" id="6C05">
    <property type="method" value="EM"/>
    <property type="resolution" value="5.15 A"/>
    <property type="chains" value="A/B=1-347"/>
</dbReference>
<dbReference type="PDB" id="6C06">
    <property type="method" value="EM"/>
    <property type="resolution" value="5.15 A"/>
    <property type="chains" value="A/B=1-347"/>
</dbReference>
<dbReference type="PDB" id="6DV9">
    <property type="method" value="X-ray"/>
    <property type="resolution" value="3.80 A"/>
    <property type="chains" value="A/B=1-347"/>
</dbReference>
<dbReference type="PDB" id="6DVB">
    <property type="method" value="X-ray"/>
    <property type="resolution" value="3.80 A"/>
    <property type="chains" value="A/B=1-347"/>
</dbReference>
<dbReference type="PDB" id="6DVC">
    <property type="method" value="X-ray"/>
    <property type="resolution" value="3.30 A"/>
    <property type="chains" value="A/B=1-347"/>
</dbReference>
<dbReference type="PDB" id="6DVD">
    <property type="method" value="X-ray"/>
    <property type="resolution" value="3.90 A"/>
    <property type="chains" value="A/B=1-347"/>
</dbReference>
<dbReference type="PDB" id="6DVE">
    <property type="method" value="X-ray"/>
    <property type="resolution" value="3.81 A"/>
    <property type="chains" value="A/B=1-347"/>
</dbReference>
<dbReference type="PDB" id="6EDT">
    <property type="method" value="EM"/>
    <property type="chains" value="A/B=1-347"/>
</dbReference>
<dbReference type="PDB" id="6EE8">
    <property type="method" value="EM"/>
    <property type="resolution" value="3.92 A"/>
    <property type="chains" value="A/B=1-347"/>
</dbReference>
<dbReference type="PDB" id="6EEC">
    <property type="method" value="EM"/>
    <property type="resolution" value="3.55 A"/>
    <property type="chains" value="A/B=1-347"/>
</dbReference>
<dbReference type="PDB" id="6FBV">
    <property type="method" value="EM"/>
    <property type="resolution" value="3.50 A"/>
    <property type="chains" value="A/B=1-347"/>
</dbReference>
<dbReference type="PDB" id="6JCX">
    <property type="method" value="X-ray"/>
    <property type="resolution" value="2.90 A"/>
    <property type="chains" value="A/B=1-347"/>
</dbReference>
<dbReference type="PDB" id="6JCY">
    <property type="method" value="X-ray"/>
    <property type="resolution" value="3.11 A"/>
    <property type="chains" value="A/B=1-347"/>
</dbReference>
<dbReference type="PDB" id="6KON">
    <property type="method" value="X-ray"/>
    <property type="resolution" value="3.00 A"/>
    <property type="chains" value="A/B=1-347"/>
</dbReference>
<dbReference type="PDB" id="6KOO">
    <property type="method" value="X-ray"/>
    <property type="resolution" value="2.80 A"/>
    <property type="chains" value="A/B=1-347"/>
</dbReference>
<dbReference type="PDB" id="6KOP">
    <property type="method" value="X-ray"/>
    <property type="resolution" value="3.30 A"/>
    <property type="chains" value="A/B=1-347"/>
</dbReference>
<dbReference type="PDB" id="6KOQ">
    <property type="method" value="X-ray"/>
    <property type="resolution" value="3.35 A"/>
    <property type="chains" value="A/B=1-347"/>
</dbReference>
<dbReference type="PDB" id="6M7J">
    <property type="method" value="EM"/>
    <property type="resolution" value="4.40 A"/>
    <property type="chains" value="A/B=1-347"/>
</dbReference>
<dbReference type="PDB" id="6TYE">
    <property type="method" value="X-ray"/>
    <property type="resolution" value="3.79 A"/>
    <property type="chains" value="A/B=1-347"/>
</dbReference>
<dbReference type="PDB" id="6TYF">
    <property type="method" value="X-ray"/>
    <property type="resolution" value="3.80 A"/>
    <property type="chains" value="A/B=1-347"/>
</dbReference>
<dbReference type="PDB" id="6TYG">
    <property type="method" value="X-ray"/>
    <property type="resolution" value="3.50 A"/>
    <property type="chains" value="A/B=1-347"/>
</dbReference>
<dbReference type="PDB" id="6VVX">
    <property type="method" value="EM"/>
    <property type="resolution" value="3.39 A"/>
    <property type="chains" value="A/B=1-347"/>
</dbReference>
<dbReference type="PDB" id="6VVY">
    <property type="method" value="EM"/>
    <property type="resolution" value="3.42 A"/>
    <property type="chains" value="A/B=1-347"/>
</dbReference>
<dbReference type="PDB" id="6VVZ">
    <property type="method" value="EM"/>
    <property type="resolution" value="3.72 A"/>
    <property type="chains" value="A/B=1-347"/>
</dbReference>
<dbReference type="PDB" id="6VW0">
    <property type="method" value="EM"/>
    <property type="resolution" value="3.59 A"/>
    <property type="chains" value="A/B=1-347"/>
</dbReference>
<dbReference type="PDB" id="7KIF">
    <property type="method" value="EM"/>
    <property type="resolution" value="2.94 A"/>
    <property type="chains" value="A/B=1-347"/>
</dbReference>
<dbReference type="PDB" id="7KIM">
    <property type="method" value="EM"/>
    <property type="resolution" value="3.38 A"/>
    <property type="chains" value="A/B=1-347"/>
</dbReference>
<dbReference type="PDB" id="7KIN">
    <property type="method" value="EM"/>
    <property type="resolution" value="2.74 A"/>
    <property type="chains" value="A/B=1-347"/>
</dbReference>
<dbReference type="PDB" id="7PP4">
    <property type="method" value="EM"/>
    <property type="resolution" value="3.84 A"/>
    <property type="chains" value="a/b=1-347"/>
</dbReference>
<dbReference type="PDB" id="7Q4U">
    <property type="method" value="EM"/>
    <property type="resolution" value="4.39 A"/>
    <property type="chains" value="A/AA/B/FA/G/GA/H/LA/M/MA/N/RA/S/SA/T/Z=1-347"/>
</dbReference>
<dbReference type="PDB" id="7Q59">
    <property type="method" value="EM"/>
    <property type="resolution" value="4.36 A"/>
    <property type="chains" value="A/B/a/b=1-347"/>
</dbReference>
<dbReference type="PDB" id="7RWI">
    <property type="method" value="X-ray"/>
    <property type="resolution" value="3.70 A"/>
    <property type="chains" value="A/B=1-347"/>
</dbReference>
<dbReference type="PDB" id="7U22">
    <property type="method" value="X-ray"/>
    <property type="resolution" value="3.87 A"/>
    <property type="chains" value="A/B=1-347"/>
</dbReference>
<dbReference type="PDB" id="7Z8Q">
    <property type="method" value="EM"/>
    <property type="resolution" value="4.08 A"/>
    <property type="chains" value="a/b=1-347"/>
</dbReference>
<dbReference type="PDB" id="7ZF2">
    <property type="method" value="EM"/>
    <property type="resolution" value="3.86 A"/>
    <property type="chains" value="A/B=1-347"/>
</dbReference>
<dbReference type="PDB" id="8E74">
    <property type="method" value="EM"/>
    <property type="resolution" value="2.94 A"/>
    <property type="chains" value="A/B=1-347"/>
</dbReference>
<dbReference type="PDB" id="8E79">
    <property type="method" value="EM"/>
    <property type="resolution" value="3.71 A"/>
    <property type="chains" value="A/B=1-347"/>
</dbReference>
<dbReference type="PDB" id="8E82">
    <property type="method" value="EM"/>
    <property type="resolution" value="3.03 A"/>
    <property type="chains" value="A/B=1-347"/>
</dbReference>
<dbReference type="PDB" id="8E8M">
    <property type="method" value="EM"/>
    <property type="resolution" value="3.13 A"/>
    <property type="chains" value="A/B=1-347"/>
</dbReference>
<dbReference type="PDB" id="8E95">
    <property type="method" value="EM"/>
    <property type="resolution" value="2.90 A"/>
    <property type="chains" value="A/B=1-347"/>
</dbReference>
<dbReference type="PDB" id="8EHQ">
    <property type="method" value="EM"/>
    <property type="resolution" value="3.00 A"/>
    <property type="chains" value="A/B=1-347"/>
</dbReference>
<dbReference type="PDB" id="8EJ3">
    <property type="method" value="EM"/>
    <property type="resolution" value="3.13 A"/>
    <property type="chains" value="A/B=1-347"/>
</dbReference>
<dbReference type="PDB" id="8EOE">
    <property type="method" value="EM"/>
    <property type="resolution" value="3.20 A"/>
    <property type="chains" value="A/B=1-347"/>
</dbReference>
<dbReference type="PDB" id="8EOF">
    <property type="method" value="EM"/>
    <property type="resolution" value="3.30 A"/>
    <property type="chains" value="A/B=1-347"/>
</dbReference>
<dbReference type="PDB" id="8EOS">
    <property type="method" value="EM"/>
    <property type="resolution" value="3.10 A"/>
    <property type="chains" value="A/B=1-347"/>
</dbReference>
<dbReference type="PDB" id="8EOT">
    <property type="method" value="EM"/>
    <property type="resolution" value="3.30 A"/>
    <property type="chains" value="A/B=1-347"/>
</dbReference>
<dbReference type="PDB" id="8EXY">
    <property type="method" value="EM"/>
    <property type="resolution" value="3.20 A"/>
    <property type="chains" value="A/B=1-347"/>
</dbReference>
<dbReference type="PDB" id="8HIH">
    <property type="method" value="EM"/>
    <property type="resolution" value="3.66 A"/>
    <property type="chains" value="A/B/G=1-347"/>
</dbReference>
<dbReference type="PDBsum" id="5UH5"/>
<dbReference type="PDBsum" id="5UH6"/>
<dbReference type="PDBsum" id="5UH8"/>
<dbReference type="PDBsum" id="5UH9"/>
<dbReference type="PDBsum" id="5UHA"/>
<dbReference type="PDBsum" id="5UHB"/>
<dbReference type="PDBsum" id="5UHC"/>
<dbReference type="PDBsum" id="5UHD"/>
<dbReference type="PDBsum" id="5UHE"/>
<dbReference type="PDBsum" id="5UHF"/>
<dbReference type="PDBsum" id="5UHG"/>
<dbReference type="PDBsum" id="5ZX2"/>
<dbReference type="PDBsum" id="5ZX3"/>
<dbReference type="PDBsum" id="6BZO"/>
<dbReference type="PDBsum" id="6C04"/>
<dbReference type="PDBsum" id="6C05"/>
<dbReference type="PDBsum" id="6C06"/>
<dbReference type="PDBsum" id="6DV9"/>
<dbReference type="PDBsum" id="6DVB"/>
<dbReference type="PDBsum" id="6DVC"/>
<dbReference type="PDBsum" id="6DVD"/>
<dbReference type="PDBsum" id="6DVE"/>
<dbReference type="PDBsum" id="6EDT"/>
<dbReference type="PDBsum" id="6EE8"/>
<dbReference type="PDBsum" id="6EEC"/>
<dbReference type="PDBsum" id="6FBV"/>
<dbReference type="PDBsum" id="6JCX"/>
<dbReference type="PDBsum" id="6JCY"/>
<dbReference type="PDBsum" id="6KON"/>
<dbReference type="PDBsum" id="6KOO"/>
<dbReference type="PDBsum" id="6KOP"/>
<dbReference type="PDBsum" id="6KOQ"/>
<dbReference type="PDBsum" id="6M7J"/>
<dbReference type="PDBsum" id="6TYE"/>
<dbReference type="PDBsum" id="6TYF"/>
<dbReference type="PDBsum" id="6TYG"/>
<dbReference type="PDBsum" id="6VVX"/>
<dbReference type="PDBsum" id="6VVY"/>
<dbReference type="PDBsum" id="6VVZ"/>
<dbReference type="PDBsum" id="6VW0"/>
<dbReference type="PDBsum" id="7KIF"/>
<dbReference type="PDBsum" id="7KIM"/>
<dbReference type="PDBsum" id="7KIN"/>
<dbReference type="PDBsum" id="7PP4"/>
<dbReference type="PDBsum" id="7Q4U"/>
<dbReference type="PDBsum" id="7Q59"/>
<dbReference type="PDBsum" id="7RWI"/>
<dbReference type="PDBsum" id="7U22"/>
<dbReference type="PDBsum" id="7Z8Q"/>
<dbReference type="PDBsum" id="7ZF2"/>
<dbReference type="PDBsum" id="8E74"/>
<dbReference type="PDBsum" id="8E79"/>
<dbReference type="PDBsum" id="8E82"/>
<dbReference type="PDBsum" id="8E8M"/>
<dbReference type="PDBsum" id="8E95"/>
<dbReference type="PDBsum" id="8EHQ"/>
<dbReference type="PDBsum" id="8EJ3"/>
<dbReference type="PDBsum" id="8EOE"/>
<dbReference type="PDBsum" id="8EOF"/>
<dbReference type="PDBsum" id="8EOS"/>
<dbReference type="PDBsum" id="8EOT"/>
<dbReference type="PDBsum" id="8EXY"/>
<dbReference type="PDBsum" id="8HIH"/>
<dbReference type="EMDB" id="EMD-13579"/>
<dbReference type="EMDB" id="EMD-13817"/>
<dbReference type="EMDB" id="EMD-13829"/>
<dbReference type="EMDB" id="EMD-14378"/>
<dbReference type="EMDB" id="EMD-14560"/>
<dbReference type="EMDB" id="EMD-14974"/>
<dbReference type="EMDB" id="EMD-28149"/>
<dbReference type="EMDB" id="EMD-28174"/>
<dbReference type="EMDB" id="EMD-28373"/>
<dbReference type="EMDB" id="EMD-28374"/>
<dbReference type="EMDB" id="EMD-28466"/>
<dbReference type="EMDB" id="EMD-28467"/>
<dbReference type="EMDB" id="EMD-28665"/>
<dbReference type="EMDB" id="EMD-34816"/>
<dbReference type="EMDB" id="EMD-4230"/>
<dbReference type="EMDB" id="EMD-61492"/>
<dbReference type="EMDB" id="EMD-62293"/>
<dbReference type="EMDB" id="EMD-62294"/>
<dbReference type="EMDB" id="EMD-62295"/>
<dbReference type="SASBDB" id="P9WGZ1"/>
<dbReference type="SMR" id="P9WGZ1"/>
<dbReference type="FunCoup" id="P9WGZ1">
    <property type="interactions" value="153"/>
</dbReference>
<dbReference type="IntAct" id="P9WGZ1">
    <property type="interactions" value="2"/>
</dbReference>
<dbReference type="STRING" id="83332.Rv3457c"/>
<dbReference type="BindingDB" id="P9WGZ1"/>
<dbReference type="PaxDb" id="83332-Rv3457c"/>
<dbReference type="DNASU" id="887629"/>
<dbReference type="GeneID" id="887629"/>
<dbReference type="KEGG" id="mtu:Rv3457c"/>
<dbReference type="KEGG" id="mtv:RVBD_3457c"/>
<dbReference type="TubercuList" id="Rv3457c"/>
<dbReference type="eggNOG" id="COG0202">
    <property type="taxonomic scope" value="Bacteria"/>
</dbReference>
<dbReference type="InParanoid" id="P9WGZ1"/>
<dbReference type="OrthoDB" id="9805706at2"/>
<dbReference type="PhylomeDB" id="P9WGZ1"/>
<dbReference type="BRENDA" id="2.7.7.6">
    <property type="organism ID" value="3445"/>
</dbReference>
<dbReference type="Reactome" id="R-HSA-9639775">
    <property type="pathway name" value="Antimicrobial action and antimicrobial resistance in Mtb"/>
</dbReference>
<dbReference type="Proteomes" id="UP000001584">
    <property type="component" value="Chromosome"/>
</dbReference>
<dbReference type="GO" id="GO:0005737">
    <property type="term" value="C:cytoplasm"/>
    <property type="evidence" value="ECO:0000318"/>
    <property type="project" value="GO_Central"/>
</dbReference>
<dbReference type="GO" id="GO:0005829">
    <property type="term" value="C:cytosol"/>
    <property type="evidence" value="ECO:0007005"/>
    <property type="project" value="MTBBASE"/>
</dbReference>
<dbReference type="GO" id="GO:0000428">
    <property type="term" value="C:DNA-directed RNA polymerase complex"/>
    <property type="evidence" value="ECO:0007669"/>
    <property type="project" value="UniProtKB-KW"/>
</dbReference>
<dbReference type="GO" id="GO:0009274">
    <property type="term" value="C:peptidoglycan-based cell wall"/>
    <property type="evidence" value="ECO:0007005"/>
    <property type="project" value="MTBBASE"/>
</dbReference>
<dbReference type="GO" id="GO:0005886">
    <property type="term" value="C:plasma membrane"/>
    <property type="evidence" value="ECO:0007005"/>
    <property type="project" value="MTBBASE"/>
</dbReference>
<dbReference type="GO" id="GO:0003677">
    <property type="term" value="F:DNA binding"/>
    <property type="evidence" value="ECO:0007669"/>
    <property type="project" value="UniProtKB-UniRule"/>
</dbReference>
<dbReference type="GO" id="GO:0003899">
    <property type="term" value="F:DNA-directed RNA polymerase activity"/>
    <property type="evidence" value="ECO:0007669"/>
    <property type="project" value="UniProtKB-UniRule"/>
</dbReference>
<dbReference type="GO" id="GO:0046983">
    <property type="term" value="F:protein dimerization activity"/>
    <property type="evidence" value="ECO:0007669"/>
    <property type="project" value="InterPro"/>
</dbReference>
<dbReference type="GO" id="GO:0006351">
    <property type="term" value="P:DNA-templated transcription"/>
    <property type="evidence" value="ECO:0007669"/>
    <property type="project" value="UniProtKB-UniRule"/>
</dbReference>
<dbReference type="CDD" id="cd06928">
    <property type="entry name" value="RNAP_alpha_NTD"/>
    <property type="match status" value="1"/>
</dbReference>
<dbReference type="FunFam" id="1.10.150.20:FF:000001">
    <property type="entry name" value="DNA-directed RNA polymerase subunit alpha"/>
    <property type="match status" value="1"/>
</dbReference>
<dbReference type="FunFam" id="2.170.120.12:FF:000001">
    <property type="entry name" value="DNA-directed RNA polymerase subunit alpha"/>
    <property type="match status" value="1"/>
</dbReference>
<dbReference type="Gene3D" id="1.10.150.20">
    <property type="entry name" value="5' to 3' exonuclease, C-terminal subdomain"/>
    <property type="match status" value="1"/>
</dbReference>
<dbReference type="Gene3D" id="2.170.120.12">
    <property type="entry name" value="DNA-directed RNA polymerase, insert domain"/>
    <property type="match status" value="1"/>
</dbReference>
<dbReference type="Gene3D" id="3.30.1360.10">
    <property type="entry name" value="RNA polymerase, RBP11-like subunit"/>
    <property type="match status" value="1"/>
</dbReference>
<dbReference type="HAMAP" id="MF_00059">
    <property type="entry name" value="RNApol_bact_RpoA"/>
    <property type="match status" value="1"/>
</dbReference>
<dbReference type="InterPro" id="IPR011262">
    <property type="entry name" value="DNA-dir_RNA_pol_insert"/>
</dbReference>
<dbReference type="InterPro" id="IPR011263">
    <property type="entry name" value="DNA-dir_RNA_pol_RpoA/D/Rpb3"/>
</dbReference>
<dbReference type="InterPro" id="IPR011773">
    <property type="entry name" value="DNA-dir_RpoA"/>
</dbReference>
<dbReference type="InterPro" id="IPR036603">
    <property type="entry name" value="RBP11-like"/>
</dbReference>
<dbReference type="InterPro" id="IPR011260">
    <property type="entry name" value="RNAP_asu_C"/>
</dbReference>
<dbReference type="InterPro" id="IPR036643">
    <property type="entry name" value="RNApol_insert_sf"/>
</dbReference>
<dbReference type="NCBIfam" id="NF003513">
    <property type="entry name" value="PRK05182.1-2"/>
    <property type="match status" value="1"/>
</dbReference>
<dbReference type="NCBIfam" id="NF003514">
    <property type="entry name" value="PRK05182.1-4"/>
    <property type="match status" value="1"/>
</dbReference>
<dbReference type="NCBIfam" id="NF003519">
    <property type="entry name" value="PRK05182.2-5"/>
    <property type="match status" value="1"/>
</dbReference>
<dbReference type="NCBIfam" id="TIGR02027">
    <property type="entry name" value="rpoA"/>
    <property type="match status" value="1"/>
</dbReference>
<dbReference type="Pfam" id="PF01000">
    <property type="entry name" value="RNA_pol_A_bac"/>
    <property type="match status" value="1"/>
</dbReference>
<dbReference type="Pfam" id="PF03118">
    <property type="entry name" value="RNA_pol_A_CTD"/>
    <property type="match status" value="1"/>
</dbReference>
<dbReference type="Pfam" id="PF01193">
    <property type="entry name" value="RNA_pol_L"/>
    <property type="match status" value="1"/>
</dbReference>
<dbReference type="SMART" id="SM00662">
    <property type="entry name" value="RPOLD"/>
    <property type="match status" value="1"/>
</dbReference>
<dbReference type="SUPFAM" id="SSF47789">
    <property type="entry name" value="C-terminal domain of RNA polymerase alpha subunit"/>
    <property type="match status" value="1"/>
</dbReference>
<dbReference type="SUPFAM" id="SSF56553">
    <property type="entry name" value="Insert subdomain of RNA polymerase alpha subunit"/>
    <property type="match status" value="1"/>
</dbReference>
<dbReference type="SUPFAM" id="SSF55257">
    <property type="entry name" value="RBP11-like subunits of RNA polymerase"/>
    <property type="match status" value="1"/>
</dbReference>
<feature type="chain" id="PRO_0000175345" description="DNA-directed RNA polymerase subunit alpha">
    <location>
        <begin position="1"/>
        <end position="347"/>
    </location>
</feature>
<feature type="region of interest" description="Alpha N-terminal domain (alpha-NTD)" evidence="1">
    <location>
        <begin position="1"/>
        <end position="226"/>
    </location>
</feature>
<feature type="region of interest" description="Alpha C-terminal domain (alpha-CTD)" evidence="1">
    <location>
        <begin position="243"/>
        <end position="347"/>
    </location>
</feature>
<feature type="strand" evidence="6">
    <location>
        <begin position="8"/>
        <end position="15"/>
    </location>
</feature>
<feature type="strand" evidence="6">
    <location>
        <begin position="18"/>
        <end position="26"/>
    </location>
</feature>
<feature type="helix" evidence="6">
    <location>
        <begin position="31"/>
        <end position="42"/>
    </location>
</feature>
<feature type="strand" evidence="6">
    <location>
        <begin position="48"/>
        <end position="58"/>
    </location>
</feature>
<feature type="strand" evidence="6">
    <location>
        <begin position="60"/>
        <end position="64"/>
    </location>
</feature>
<feature type="strand" evidence="6">
    <location>
        <begin position="69"/>
        <end position="71"/>
    </location>
</feature>
<feature type="helix" evidence="6">
    <location>
        <begin position="73"/>
        <end position="80"/>
    </location>
</feature>
<feature type="strand" evidence="4">
    <location>
        <begin position="85"/>
        <end position="89"/>
    </location>
</feature>
<feature type="strand" evidence="6">
    <location>
        <begin position="93"/>
        <end position="106"/>
    </location>
</feature>
<feature type="helix" evidence="6">
    <location>
        <begin position="107"/>
        <end position="109"/>
    </location>
</feature>
<feature type="strand" evidence="6">
    <location>
        <begin position="117"/>
        <end position="119"/>
    </location>
</feature>
<feature type="strand" evidence="6">
    <location>
        <begin position="124"/>
        <end position="128"/>
    </location>
</feature>
<feature type="strand" evidence="6">
    <location>
        <begin position="133"/>
        <end position="143"/>
    </location>
</feature>
<feature type="strand" evidence="6">
    <location>
        <begin position="145"/>
        <end position="147"/>
    </location>
</feature>
<feature type="helix" evidence="6">
    <location>
        <begin position="152"/>
        <end position="155"/>
    </location>
</feature>
<feature type="strand" evidence="8">
    <location>
        <begin position="161"/>
        <end position="163"/>
    </location>
</feature>
<feature type="strand" evidence="9">
    <location>
        <begin position="166"/>
        <end position="168"/>
    </location>
</feature>
<feature type="strand" evidence="6">
    <location>
        <begin position="171"/>
        <end position="178"/>
    </location>
</feature>
<feature type="strand" evidence="7">
    <location>
        <begin position="179"/>
        <end position="181"/>
    </location>
</feature>
<feature type="strand" evidence="4">
    <location>
        <begin position="184"/>
        <end position="186"/>
    </location>
</feature>
<feature type="strand" evidence="6">
    <location>
        <begin position="190"/>
        <end position="198"/>
    </location>
</feature>
<feature type="strand" evidence="6">
    <location>
        <begin position="200"/>
        <end position="202"/>
    </location>
</feature>
<feature type="helix" evidence="6">
    <location>
        <begin position="204"/>
        <end position="223"/>
    </location>
</feature>
<feature type="turn" evidence="5">
    <location>
        <begin position="224"/>
        <end position="226"/>
    </location>
</feature>
<name>RPOA_MYCTU</name>
<keyword id="KW-0002">3D-structure</keyword>
<keyword id="KW-0240">DNA-directed RNA polymerase</keyword>
<keyword id="KW-0548">Nucleotidyltransferase</keyword>
<keyword id="KW-1185">Reference proteome</keyword>
<keyword id="KW-0804">Transcription</keyword>
<keyword id="KW-0808">Transferase</keyword>
<reference key="1">
    <citation type="journal article" date="1998" name="Nature">
        <title>Deciphering the biology of Mycobacterium tuberculosis from the complete genome sequence.</title>
        <authorList>
            <person name="Cole S.T."/>
            <person name="Brosch R."/>
            <person name="Parkhill J."/>
            <person name="Garnier T."/>
            <person name="Churcher C.M."/>
            <person name="Harris D.E."/>
            <person name="Gordon S.V."/>
            <person name="Eiglmeier K."/>
            <person name="Gas S."/>
            <person name="Barry C.E. III"/>
            <person name="Tekaia F."/>
            <person name="Badcock K."/>
            <person name="Basham D."/>
            <person name="Brown D."/>
            <person name="Chillingworth T."/>
            <person name="Connor R."/>
            <person name="Davies R.M."/>
            <person name="Devlin K."/>
            <person name="Feltwell T."/>
            <person name="Gentles S."/>
            <person name="Hamlin N."/>
            <person name="Holroyd S."/>
            <person name="Hornsby T."/>
            <person name="Jagels K."/>
            <person name="Krogh A."/>
            <person name="McLean J."/>
            <person name="Moule S."/>
            <person name="Murphy L.D."/>
            <person name="Oliver S."/>
            <person name="Osborne J."/>
            <person name="Quail M.A."/>
            <person name="Rajandream M.A."/>
            <person name="Rogers J."/>
            <person name="Rutter S."/>
            <person name="Seeger K."/>
            <person name="Skelton S."/>
            <person name="Squares S."/>
            <person name="Squares R."/>
            <person name="Sulston J.E."/>
            <person name="Taylor K."/>
            <person name="Whitehead S."/>
            <person name="Barrell B.G."/>
        </authorList>
    </citation>
    <scope>NUCLEOTIDE SEQUENCE [LARGE SCALE GENOMIC DNA]</scope>
    <source>
        <strain>ATCC 25618 / H37Rv</strain>
    </source>
</reference>
<reference key="2">
    <citation type="journal article" date="2002" name="Mol. Microbiol.">
        <title>Evaluation of a nutrient starvation model of Mycobacterium tuberculosis persistence by gene and protein expression profiling.</title>
        <authorList>
            <person name="Betts J.C."/>
            <person name="Lukey P.T."/>
            <person name="Robb L.C."/>
            <person name="McAdam R.A."/>
            <person name="Duncan K."/>
        </authorList>
    </citation>
    <scope>INDUCTION FOLLOWING STARVATION</scope>
    <source>
        <strain>ATCC 25618 / H37Rv / NCTC 7416</strain>
    </source>
</reference>
<reference key="3">
    <citation type="journal article" date="2011" name="Mol. Cell. Proteomics">
        <title>Proteogenomic analysis of Mycobacterium tuberculosis by high resolution mass spectrometry.</title>
        <authorList>
            <person name="Kelkar D.S."/>
            <person name="Kumar D."/>
            <person name="Kumar P."/>
            <person name="Balakrishnan L."/>
            <person name="Muthusamy B."/>
            <person name="Yadav A.K."/>
            <person name="Shrivastava P."/>
            <person name="Marimuthu A."/>
            <person name="Anand S."/>
            <person name="Sundaram H."/>
            <person name="Kingsbury R."/>
            <person name="Harsha H.C."/>
            <person name="Nair B."/>
            <person name="Prasad T.S."/>
            <person name="Chauhan D.S."/>
            <person name="Katoch K."/>
            <person name="Katoch V.M."/>
            <person name="Kumar P."/>
            <person name="Chaerkady R."/>
            <person name="Ramachandran S."/>
            <person name="Dash D."/>
            <person name="Pandey A."/>
        </authorList>
    </citation>
    <scope>IDENTIFICATION BY MASS SPECTROMETRY [LARGE SCALE ANALYSIS]</scope>
    <source>
        <strain>ATCC 25618 / H37Rv</strain>
    </source>
</reference>
<reference key="4">
    <citation type="journal article" date="2012" name="Nucleic Acids Res.">
        <title>Mycobacterium tuberculosis RbpA protein is a new type of transcriptional activator that stabilizes the sigma A-containing RNA polymerase holoenzyme.</title>
        <authorList>
            <person name="Hu Y."/>
            <person name="Morichaud Z."/>
            <person name="Chen S."/>
            <person name="Leonetti J.P."/>
            <person name="Brodolin K."/>
        </authorList>
    </citation>
    <scope>FUNCTION</scope>
    <scope>SUBUNIT</scope>
    <source>
        <strain>ATCC 25618 / H37Rv</strain>
    </source>
</reference>
<sequence>MLISQRPTLSEDVLTDNRSQFVIEPLEPGFGYTLGNSLRRTLLSSIPGAAVTSIRIDGVLHEFTTVPGVKEDVTEIILNLKSLVVSSEEDEPVTMYLRKQGPGEVTAGDIVPPAGVTVHNPGMHIATLNDKGKLEVELVVERGRGYVPAVQNRASGAEIGRIPVDSIYSPVLKVTYKVDATRVEQRTDFDKLILDVETKNSISPRDALASAGKTLVELFGLARELNVEAEGIEIGPSPAEADHIASFALPIDDLDLTVRSYNCLKREGVHTVGELVARTESDLLDIRNFGQKSIDEVKIKLHQLGLSLKDSPPSFDPSEVAGYDVATGTWSTEGAYDEQDYAETEQL</sequence>
<organism>
    <name type="scientific">Mycobacterium tuberculosis (strain ATCC 25618 / H37Rv)</name>
    <dbReference type="NCBI Taxonomy" id="83332"/>
    <lineage>
        <taxon>Bacteria</taxon>
        <taxon>Bacillati</taxon>
        <taxon>Actinomycetota</taxon>
        <taxon>Actinomycetes</taxon>
        <taxon>Mycobacteriales</taxon>
        <taxon>Mycobacteriaceae</taxon>
        <taxon>Mycobacterium</taxon>
        <taxon>Mycobacterium tuberculosis complex</taxon>
    </lineage>
</organism>
<protein>
    <recommendedName>
        <fullName evidence="1">DNA-directed RNA polymerase subunit alpha</fullName>
        <shortName evidence="1">RNAP subunit alpha</shortName>
        <ecNumber evidence="1">2.7.7.6</ecNumber>
    </recommendedName>
    <alternativeName>
        <fullName evidence="1">RNA polymerase subunit alpha</fullName>
    </alternativeName>
    <alternativeName>
        <fullName evidence="1">Transcriptase subunit alpha</fullName>
    </alternativeName>
</protein>